<comment type="function">
    <text evidence="2">GTP cyclohydrolase 1 is the first enzyme in the biosynthetic pathway leading to folic acid.</text>
</comment>
<comment type="catalytic activity">
    <reaction evidence="2">
        <text>GTP + H2O = 7,8-dihydroneopterin 3'-triphosphate + formate + H(+)</text>
        <dbReference type="Rhea" id="RHEA:17473"/>
        <dbReference type="ChEBI" id="CHEBI:15377"/>
        <dbReference type="ChEBI" id="CHEBI:15378"/>
        <dbReference type="ChEBI" id="CHEBI:15740"/>
        <dbReference type="ChEBI" id="CHEBI:37565"/>
        <dbReference type="ChEBI" id="CHEBI:58462"/>
        <dbReference type="EC" id="3.5.4.16"/>
    </reaction>
</comment>
<comment type="pathway">
    <text>Cofactor biosynthesis; 7,8-dihydroneopterin triphosphate biosynthesis; 7,8-dihydroneopterin triphosphate from GTP: step 1/1.</text>
</comment>
<comment type="subunit">
    <text evidence="2">Homodimer.</text>
</comment>
<comment type="tissue specificity">
    <text evidence="2">Expressed in leaves and unripe fruits.</text>
</comment>
<comment type="similarity">
    <text evidence="4">Belongs to the GTP cyclohydrolase I family.</text>
</comment>
<keyword id="KW-0342">GTP-binding</keyword>
<keyword id="KW-0378">Hydrolase</keyword>
<keyword id="KW-0479">Metal-binding</keyword>
<keyword id="KW-0547">Nucleotide-binding</keyword>
<keyword id="KW-1185">Reference proteome</keyword>
<keyword id="KW-0783">Tetrahydrobiopterin biosynthesis</keyword>
<keyword id="KW-0862">Zinc</keyword>
<sequence>MGALDEGHYHAEIDNEVSFELGFETQPETLVIQDAVRVLLQGLGEDINREGIKKTPFRVAKALRQGTRGYKQKVNDIVHGALFPEAGLEGGSGQAGGVGGLVIVRDLDLFSYCESCLLPFQVKCHVGYVPSGKRVVGLSKLSRVADIFAKRLQSPQRLADEVCTALQHGIKPTGVAVVLQCMHIHFPNFESAFLDSTSQGWVKITATSGSGVFEDGNADVWTDFWSLLKFRGISIDNAHRRSSGQSWCPSQSCGMPGQANSAMTNAVNSILKSLGEDPLREELVETPSRFVKWFMNFRNSNLEMKLNGFVRSRIDTRSPQGGNFNDGICSELNLSFWSQCEHHLLPFQGVVHIGYHSSDGVNPVGRPLVQSVVHFYGFKLQVQERVTRQIAETVSSFLGEDIIVVVEANHTCMISRGIEKFGSNTATFAVLGRFSTDPVARAKFLQSLPDSGSAGR</sequence>
<protein>
    <recommendedName>
        <fullName evidence="4">GTP cyclohydrolase 1</fullName>
        <ecNumber evidence="2">3.5.4.16</ecNumber>
    </recommendedName>
    <alternativeName>
        <fullName evidence="3">GTP cyclohydrolase I</fullName>
    </alternativeName>
</protein>
<dbReference type="EC" id="3.5.4.16" evidence="2"/>
<dbReference type="EMBL" id="AY069920">
    <property type="protein sequence ID" value="AAL49957.1"/>
    <property type="molecule type" value="mRNA"/>
</dbReference>
<dbReference type="RefSeq" id="NP_001234141.1">
    <property type="nucleotide sequence ID" value="NM_001247212.3"/>
</dbReference>
<dbReference type="SMR" id="Q8VYU3"/>
<dbReference type="FunCoup" id="Q8VYU3">
    <property type="interactions" value="1181"/>
</dbReference>
<dbReference type="STRING" id="4081.Q8VYU3"/>
<dbReference type="PaxDb" id="4081-Solyc06g083230.2.1"/>
<dbReference type="EnsemblPlants" id="Solyc06g083230.3.1">
    <property type="protein sequence ID" value="Solyc06g083230.3.1"/>
    <property type="gene ID" value="Solyc06g083230.3"/>
</dbReference>
<dbReference type="GeneID" id="543831"/>
<dbReference type="Gramene" id="Solyc06g083230.3.1">
    <property type="protein sequence ID" value="Solyc06g083230.3.1"/>
    <property type="gene ID" value="Solyc06g083230.3"/>
</dbReference>
<dbReference type="KEGG" id="sly:543831"/>
<dbReference type="eggNOG" id="KOG2698">
    <property type="taxonomic scope" value="Eukaryota"/>
</dbReference>
<dbReference type="HOGENOM" id="CLU_039473_0_0_1"/>
<dbReference type="InParanoid" id="Q8VYU3"/>
<dbReference type="OMA" id="KVQCHVG"/>
<dbReference type="OrthoDB" id="4966at2759"/>
<dbReference type="PhylomeDB" id="Q8VYU3"/>
<dbReference type="BRENDA" id="3.5.4.16">
    <property type="organism ID" value="3101"/>
</dbReference>
<dbReference type="SABIO-RK" id="Q8VYU3"/>
<dbReference type="UniPathway" id="UPA00848">
    <property type="reaction ID" value="UER00151"/>
</dbReference>
<dbReference type="Proteomes" id="UP000004994">
    <property type="component" value="Chromosome 6"/>
</dbReference>
<dbReference type="ExpressionAtlas" id="Q8VYU3">
    <property type="expression patterns" value="baseline and differential"/>
</dbReference>
<dbReference type="GO" id="GO:0005737">
    <property type="term" value="C:cytoplasm"/>
    <property type="evidence" value="ECO:0000318"/>
    <property type="project" value="GO_Central"/>
</dbReference>
<dbReference type="GO" id="GO:0005525">
    <property type="term" value="F:GTP binding"/>
    <property type="evidence" value="ECO:0000318"/>
    <property type="project" value="GO_Central"/>
</dbReference>
<dbReference type="GO" id="GO:0003934">
    <property type="term" value="F:GTP cyclohydrolase I activity"/>
    <property type="evidence" value="ECO:0000314"/>
    <property type="project" value="UniProtKB"/>
</dbReference>
<dbReference type="GO" id="GO:0042803">
    <property type="term" value="F:protein homodimerization activity"/>
    <property type="evidence" value="ECO:0000353"/>
    <property type="project" value="UniProtKB"/>
</dbReference>
<dbReference type="GO" id="GO:0008270">
    <property type="term" value="F:zinc ion binding"/>
    <property type="evidence" value="ECO:0000318"/>
    <property type="project" value="GO_Central"/>
</dbReference>
<dbReference type="GO" id="GO:0046656">
    <property type="term" value="P:folic acid biosynthetic process"/>
    <property type="evidence" value="ECO:0000314"/>
    <property type="project" value="UniProtKB"/>
</dbReference>
<dbReference type="GO" id="GO:0006729">
    <property type="term" value="P:tetrahydrobiopterin biosynthetic process"/>
    <property type="evidence" value="ECO:0000318"/>
    <property type="project" value="GO_Central"/>
</dbReference>
<dbReference type="GO" id="GO:0046654">
    <property type="term" value="P:tetrahydrofolate biosynthetic process"/>
    <property type="evidence" value="ECO:0007669"/>
    <property type="project" value="InterPro"/>
</dbReference>
<dbReference type="FunFam" id="3.30.1130.10:FF:000007">
    <property type="entry name" value="GTP cyclohydrolase 1"/>
    <property type="match status" value="1"/>
</dbReference>
<dbReference type="FunFam" id="3.30.1130.10:FF:000008">
    <property type="entry name" value="GTP cyclohydrolase 1"/>
    <property type="match status" value="1"/>
</dbReference>
<dbReference type="Gene3D" id="1.10.286.10">
    <property type="match status" value="2"/>
</dbReference>
<dbReference type="Gene3D" id="3.30.1130.10">
    <property type="match status" value="2"/>
</dbReference>
<dbReference type="InterPro" id="IPR043133">
    <property type="entry name" value="GTP-CH-I_C/QueF"/>
</dbReference>
<dbReference type="InterPro" id="IPR043134">
    <property type="entry name" value="GTP-CH-I_N"/>
</dbReference>
<dbReference type="InterPro" id="IPR001474">
    <property type="entry name" value="GTP_CycHdrlase_I"/>
</dbReference>
<dbReference type="InterPro" id="IPR020602">
    <property type="entry name" value="GTP_CycHdrlase_I_dom"/>
</dbReference>
<dbReference type="PANTHER" id="PTHR11109:SF7">
    <property type="entry name" value="GTP CYCLOHYDROLASE 1"/>
    <property type="match status" value="1"/>
</dbReference>
<dbReference type="PANTHER" id="PTHR11109">
    <property type="entry name" value="GTP CYCLOHYDROLASE I"/>
    <property type="match status" value="1"/>
</dbReference>
<dbReference type="Pfam" id="PF01227">
    <property type="entry name" value="GTP_cyclohydroI"/>
    <property type="match status" value="2"/>
</dbReference>
<dbReference type="SUPFAM" id="SSF55620">
    <property type="entry name" value="Tetrahydrobiopterin biosynthesis enzymes-like"/>
    <property type="match status" value="2"/>
</dbReference>
<reference key="1">
    <citation type="journal article" date="2002" name="Proc. Natl. Acad. Sci. U.S.A.">
        <title>Folate synthesis in plants: the first step of the pterin branch is mediated by a unique bimodular GTP cyclohydrolase I.</title>
        <authorList>
            <person name="Basset G."/>
            <person name="Quinlivan E.P."/>
            <person name="Ziemak M.J."/>
            <person name="Diaz De La Garza R."/>
            <person name="Fischer M."/>
            <person name="Schiffmann S."/>
            <person name="Bacher A."/>
            <person name="Gregory J.F."/>
            <person name="Hanson A.D."/>
        </authorList>
    </citation>
    <scope>NUCLEOTIDE SEQUENCE [MRNA]</scope>
    <scope>FUNCTION</scope>
    <scope>CATALYTIC ACTIVITY</scope>
    <scope>SUBUNIT</scope>
    <scope>TISSUE SPECIFICITY</scope>
</reference>
<reference key="2">
    <citation type="journal article" date="2012" name="Nature">
        <title>The tomato genome sequence provides insights into fleshy fruit evolution.</title>
        <authorList>
            <consortium name="Tomato Genome Consortium"/>
        </authorList>
    </citation>
    <scope>NUCLEOTIDE SEQUENCE [LARGE SCALE GENOMIC DNA]</scope>
    <source>
        <strain>cv. Heinz 1706</strain>
    </source>
</reference>
<accession>Q8VYU3</accession>
<proteinExistence type="evidence at protein level"/>
<organism>
    <name type="scientific">Solanum lycopersicum</name>
    <name type="common">Tomato</name>
    <name type="synonym">Lycopersicon esculentum</name>
    <dbReference type="NCBI Taxonomy" id="4081"/>
    <lineage>
        <taxon>Eukaryota</taxon>
        <taxon>Viridiplantae</taxon>
        <taxon>Streptophyta</taxon>
        <taxon>Embryophyta</taxon>
        <taxon>Tracheophyta</taxon>
        <taxon>Spermatophyta</taxon>
        <taxon>Magnoliopsida</taxon>
        <taxon>eudicotyledons</taxon>
        <taxon>Gunneridae</taxon>
        <taxon>Pentapetalae</taxon>
        <taxon>asterids</taxon>
        <taxon>lamiids</taxon>
        <taxon>Solanales</taxon>
        <taxon>Solanaceae</taxon>
        <taxon>Solanoideae</taxon>
        <taxon>Solaneae</taxon>
        <taxon>Solanum</taxon>
        <taxon>Solanum subgen. Lycopersicon</taxon>
    </lineage>
</organism>
<gene>
    <name type="primary">GCH1</name>
    <name evidence="3" type="synonym">GCHI</name>
    <name type="ordered locus">Solyc06g083230</name>
    <name type="ORF">LOC543831</name>
</gene>
<evidence type="ECO:0000250" key="1">
    <source>
        <dbReference type="UniProtKB" id="P30793"/>
    </source>
</evidence>
<evidence type="ECO:0000269" key="2">
    <source>
    </source>
</evidence>
<evidence type="ECO:0000303" key="3">
    <source>
    </source>
</evidence>
<evidence type="ECO:0000305" key="4"/>
<name>GCH1_SOLLC</name>
<feature type="chain" id="PRO_0000430620" description="GTP cyclohydrolase 1">
    <location>
        <begin position="1"/>
        <end position="456"/>
    </location>
</feature>
<feature type="binding site" evidence="1">
    <location>
        <position position="340"/>
    </location>
    <ligand>
        <name>Zn(2+)</name>
        <dbReference type="ChEBI" id="CHEBI:29105"/>
    </ligand>
</feature>
<feature type="binding site" evidence="1">
    <location>
        <position position="343"/>
    </location>
    <ligand>
        <name>Zn(2+)</name>
        <dbReference type="ChEBI" id="CHEBI:29105"/>
    </ligand>
</feature>
<feature type="binding site" evidence="1">
    <location>
        <position position="412"/>
    </location>
    <ligand>
        <name>Zn(2+)</name>
        <dbReference type="ChEBI" id="CHEBI:29105"/>
    </ligand>
</feature>